<reference key="1">
    <citation type="journal article" date="2001" name="Plant Cell Physiol.">
        <title>Overexpression of the AtGluR2 gene encoding an Arabidopsis homolog of mammalian glutamate receptors impairs calcium utilization and sensitivity to ionic stress in transgenic plants.</title>
        <authorList>
            <person name="Kim S.A."/>
            <person name="Kwak J.M."/>
            <person name="Jae S.-K."/>
            <person name="Wang M.-H."/>
            <person name="Nam H.G."/>
        </authorList>
    </citation>
    <scope>NUCLEOTIDE SEQUENCE [GENOMIC DNA / MRNA]</scope>
    <scope>FUNCTION</scope>
    <scope>TISSUE SPECIFICITY</scope>
    <source>
        <strain>cv. Columbia</strain>
    </source>
</reference>
<reference key="2">
    <citation type="journal article" date="1999" name="Nature">
        <title>Sequence and analysis of chromosome 4 of the plant Arabidopsis thaliana.</title>
        <authorList>
            <person name="Mayer K.F.X."/>
            <person name="Schueller C."/>
            <person name="Wambutt R."/>
            <person name="Murphy G."/>
            <person name="Volckaert G."/>
            <person name="Pohl T."/>
            <person name="Duesterhoeft A."/>
            <person name="Stiekema W."/>
            <person name="Entian K.-D."/>
            <person name="Terryn N."/>
            <person name="Harris B."/>
            <person name="Ansorge W."/>
            <person name="Brandt P."/>
            <person name="Grivell L.A."/>
            <person name="Rieger M."/>
            <person name="Weichselgartner M."/>
            <person name="de Simone V."/>
            <person name="Obermaier B."/>
            <person name="Mache R."/>
            <person name="Mueller M."/>
            <person name="Kreis M."/>
            <person name="Delseny M."/>
            <person name="Puigdomenech P."/>
            <person name="Watson M."/>
            <person name="Schmidtheini T."/>
            <person name="Reichert B."/>
            <person name="Portetelle D."/>
            <person name="Perez-Alonso M."/>
            <person name="Boutry M."/>
            <person name="Bancroft I."/>
            <person name="Vos P."/>
            <person name="Hoheisel J."/>
            <person name="Zimmermann W."/>
            <person name="Wedler H."/>
            <person name="Ridley P."/>
            <person name="Langham S.-A."/>
            <person name="McCullagh B."/>
            <person name="Bilham L."/>
            <person name="Robben J."/>
            <person name="van der Schueren J."/>
            <person name="Grymonprez B."/>
            <person name="Chuang Y.-J."/>
            <person name="Vandenbussche F."/>
            <person name="Braeken M."/>
            <person name="Weltjens I."/>
            <person name="Voet M."/>
            <person name="Bastiaens I."/>
            <person name="Aert R."/>
            <person name="Defoor E."/>
            <person name="Weitzenegger T."/>
            <person name="Bothe G."/>
            <person name="Ramsperger U."/>
            <person name="Hilbert H."/>
            <person name="Braun M."/>
            <person name="Holzer E."/>
            <person name="Brandt A."/>
            <person name="Peters S."/>
            <person name="van Staveren M."/>
            <person name="Dirkse W."/>
            <person name="Mooijman P."/>
            <person name="Klein Lankhorst R."/>
            <person name="Rose M."/>
            <person name="Hauf J."/>
            <person name="Koetter P."/>
            <person name="Berneiser S."/>
            <person name="Hempel S."/>
            <person name="Feldpausch M."/>
            <person name="Lamberth S."/>
            <person name="Van den Daele H."/>
            <person name="De Keyser A."/>
            <person name="Buysshaert C."/>
            <person name="Gielen J."/>
            <person name="Villarroel R."/>
            <person name="De Clercq R."/>
            <person name="van Montagu M."/>
            <person name="Rogers J."/>
            <person name="Cronin A."/>
            <person name="Quail M.A."/>
            <person name="Bray-Allen S."/>
            <person name="Clark L."/>
            <person name="Doggett J."/>
            <person name="Hall S."/>
            <person name="Kay M."/>
            <person name="Lennard N."/>
            <person name="McLay K."/>
            <person name="Mayes R."/>
            <person name="Pettett A."/>
            <person name="Rajandream M.A."/>
            <person name="Lyne M."/>
            <person name="Benes V."/>
            <person name="Rechmann S."/>
            <person name="Borkova D."/>
            <person name="Bloecker H."/>
            <person name="Scharfe M."/>
            <person name="Grimm M."/>
            <person name="Loehnert T.-H."/>
            <person name="Dose S."/>
            <person name="de Haan M."/>
            <person name="Maarse A.C."/>
            <person name="Schaefer M."/>
            <person name="Mueller-Auer S."/>
            <person name="Gabel C."/>
            <person name="Fuchs M."/>
            <person name="Fartmann B."/>
            <person name="Granderath K."/>
            <person name="Dauner D."/>
            <person name="Herzl A."/>
            <person name="Neumann S."/>
            <person name="Argiriou A."/>
            <person name="Vitale D."/>
            <person name="Liguori R."/>
            <person name="Piravandi E."/>
            <person name="Massenet O."/>
            <person name="Quigley F."/>
            <person name="Clabauld G."/>
            <person name="Muendlein A."/>
            <person name="Felber R."/>
            <person name="Schnabl S."/>
            <person name="Hiller R."/>
            <person name="Schmidt W."/>
            <person name="Lecharny A."/>
            <person name="Aubourg S."/>
            <person name="Chefdor F."/>
            <person name="Cooke R."/>
            <person name="Berger C."/>
            <person name="Monfort A."/>
            <person name="Casacuberta E."/>
            <person name="Gibbons T."/>
            <person name="Weber N."/>
            <person name="Vandenbol M."/>
            <person name="Bargues M."/>
            <person name="Terol J."/>
            <person name="Torres A."/>
            <person name="Perez-Perez A."/>
            <person name="Purnelle B."/>
            <person name="Bent E."/>
            <person name="Johnson S."/>
            <person name="Tacon D."/>
            <person name="Jesse T."/>
            <person name="Heijnen L."/>
            <person name="Schwarz S."/>
            <person name="Scholler P."/>
            <person name="Heber S."/>
            <person name="Francs P."/>
            <person name="Bielke C."/>
            <person name="Frishman D."/>
            <person name="Haase D."/>
            <person name="Lemcke K."/>
            <person name="Mewes H.-W."/>
            <person name="Stocker S."/>
            <person name="Zaccaria P."/>
            <person name="Bevan M."/>
            <person name="Wilson R.K."/>
            <person name="de la Bastide M."/>
            <person name="Habermann K."/>
            <person name="Parnell L."/>
            <person name="Dedhia N."/>
            <person name="Gnoj L."/>
            <person name="Schutz K."/>
            <person name="Huang E."/>
            <person name="Spiegel L."/>
            <person name="Sekhon M."/>
            <person name="Murray J."/>
            <person name="Sheet P."/>
            <person name="Cordes M."/>
            <person name="Abu-Threideh J."/>
            <person name="Stoneking T."/>
            <person name="Kalicki J."/>
            <person name="Graves T."/>
            <person name="Harmon G."/>
            <person name="Edwards J."/>
            <person name="Latreille P."/>
            <person name="Courtney L."/>
            <person name="Cloud J."/>
            <person name="Abbott A."/>
            <person name="Scott K."/>
            <person name="Johnson D."/>
            <person name="Minx P."/>
            <person name="Bentley D."/>
            <person name="Fulton B."/>
            <person name="Miller N."/>
            <person name="Greco T."/>
            <person name="Kemp K."/>
            <person name="Kramer J."/>
            <person name="Fulton L."/>
            <person name="Mardis E."/>
            <person name="Dante M."/>
            <person name="Pepin K."/>
            <person name="Hillier L.W."/>
            <person name="Nelson J."/>
            <person name="Spieth J."/>
            <person name="Ryan E."/>
            <person name="Andrews S."/>
            <person name="Geisel C."/>
            <person name="Layman D."/>
            <person name="Du H."/>
            <person name="Ali J."/>
            <person name="Berghoff A."/>
            <person name="Jones K."/>
            <person name="Drone K."/>
            <person name="Cotton M."/>
            <person name="Joshu C."/>
            <person name="Antonoiu B."/>
            <person name="Zidanic M."/>
            <person name="Strong C."/>
            <person name="Sun H."/>
            <person name="Lamar B."/>
            <person name="Yordan C."/>
            <person name="Ma P."/>
            <person name="Zhong J."/>
            <person name="Preston R."/>
            <person name="Vil D."/>
            <person name="Shekher M."/>
            <person name="Matero A."/>
            <person name="Shah R."/>
            <person name="Swaby I.K."/>
            <person name="O'Shaughnessy A."/>
            <person name="Rodriguez M."/>
            <person name="Hoffman J."/>
            <person name="Till S."/>
            <person name="Granat S."/>
            <person name="Shohdy N."/>
            <person name="Hasegawa A."/>
            <person name="Hameed A."/>
            <person name="Lodhi M."/>
            <person name="Johnson A."/>
            <person name="Chen E."/>
            <person name="Marra M.A."/>
            <person name="Martienssen R."/>
            <person name="McCombie W.R."/>
        </authorList>
    </citation>
    <scope>NUCLEOTIDE SEQUENCE [LARGE SCALE GENOMIC DNA]</scope>
    <source>
        <strain>cv. Columbia</strain>
    </source>
</reference>
<reference key="3">
    <citation type="journal article" date="2017" name="Plant J.">
        <title>Araport11: a complete reannotation of the Arabidopsis thaliana reference genome.</title>
        <authorList>
            <person name="Cheng C.Y."/>
            <person name="Krishnakumar V."/>
            <person name="Chan A.P."/>
            <person name="Thibaud-Nissen F."/>
            <person name="Schobel S."/>
            <person name="Town C.D."/>
        </authorList>
    </citation>
    <scope>GENOME REANNOTATION</scope>
    <source>
        <strain>cv. Columbia</strain>
    </source>
</reference>
<reference key="4">
    <citation type="journal article" date="2003" name="Science">
        <title>Empirical analysis of transcriptional activity in the Arabidopsis genome.</title>
        <authorList>
            <person name="Yamada K."/>
            <person name="Lim J."/>
            <person name="Dale J.M."/>
            <person name="Chen H."/>
            <person name="Shinn P."/>
            <person name="Palm C.J."/>
            <person name="Southwick A.M."/>
            <person name="Wu H.C."/>
            <person name="Kim C.J."/>
            <person name="Nguyen M."/>
            <person name="Pham P.K."/>
            <person name="Cheuk R.F."/>
            <person name="Karlin-Newmann G."/>
            <person name="Liu S.X."/>
            <person name="Lam B."/>
            <person name="Sakano H."/>
            <person name="Wu T."/>
            <person name="Yu G."/>
            <person name="Miranda M."/>
            <person name="Quach H.L."/>
            <person name="Tripp M."/>
            <person name="Chang C.H."/>
            <person name="Lee J.M."/>
            <person name="Toriumi M.J."/>
            <person name="Chan M.M."/>
            <person name="Tang C.C."/>
            <person name="Onodera C.S."/>
            <person name="Deng J.M."/>
            <person name="Akiyama K."/>
            <person name="Ansari Y."/>
            <person name="Arakawa T."/>
            <person name="Banh J."/>
            <person name="Banno F."/>
            <person name="Bowser L."/>
            <person name="Brooks S.Y."/>
            <person name="Carninci P."/>
            <person name="Chao Q."/>
            <person name="Choy N."/>
            <person name="Enju A."/>
            <person name="Goldsmith A.D."/>
            <person name="Gurjal M."/>
            <person name="Hansen N.F."/>
            <person name="Hayashizaki Y."/>
            <person name="Johnson-Hopson C."/>
            <person name="Hsuan V.W."/>
            <person name="Iida K."/>
            <person name="Karnes M."/>
            <person name="Khan S."/>
            <person name="Koesema E."/>
            <person name="Ishida J."/>
            <person name="Jiang P.X."/>
            <person name="Jones T."/>
            <person name="Kawai J."/>
            <person name="Kamiya A."/>
            <person name="Meyers C."/>
            <person name="Nakajima M."/>
            <person name="Narusaka M."/>
            <person name="Seki M."/>
            <person name="Sakurai T."/>
            <person name="Satou M."/>
            <person name="Tamse R."/>
            <person name="Vaysberg M."/>
            <person name="Wallender E.K."/>
            <person name="Wong C."/>
            <person name="Yamamura Y."/>
            <person name="Yuan S."/>
            <person name="Shinozaki K."/>
            <person name="Davis R.W."/>
            <person name="Theologis A."/>
            <person name="Ecker J.R."/>
        </authorList>
    </citation>
    <scope>NUCLEOTIDE SEQUENCE [LARGE SCALE MRNA]</scope>
    <source>
        <strain>cv. Columbia</strain>
    </source>
</reference>
<reference key="5">
    <citation type="journal article" date="2001" name="Science">
        <title>The identity of plant glutamate receptors.</title>
        <authorList>
            <person name="Lacombe B."/>
            <person name="Becker D."/>
            <person name="Hedrich R."/>
            <person name="DeSalle R."/>
            <person name="Hollmann M."/>
            <person name="Kwak J.M."/>
            <person name="Schroeder J.I."/>
            <person name="Le Novere N."/>
            <person name="Nam H.G."/>
            <person name="Spalding E.P."/>
            <person name="Tester M."/>
            <person name="Turano F.J."/>
            <person name="Chiu J."/>
            <person name="Coruzzi G."/>
        </authorList>
    </citation>
    <scope>GENE FAMILY</scope>
    <scope>NOMENCLATURE</scope>
</reference>
<reference key="6">
    <citation type="journal article" date="2002" name="Mol. Biol. Evol.">
        <title>Phylogenetic and expression analysis of the glutamate-receptor-like gene family in Arabidopsis thaliana.</title>
        <authorList>
            <person name="Chiu J.C."/>
            <person name="Brenner E.D."/>
            <person name="DeSalle R."/>
            <person name="Nitabach M.N."/>
            <person name="Holmes T.C."/>
            <person name="Coruzzi G.M."/>
        </authorList>
    </citation>
    <scope>TISSUE SPECIFICITY</scope>
</reference>
<reference key="7">
    <citation type="journal article" date="2002" name="Plant Sci.">
        <title>The putative glutamate receptor 3.2 from Arabidopsis thaliana (AtGLR3.2) is an integral membrane peptide that accumulates in rapidly growing tissues and persists in vascular-associated tissues.</title>
        <authorList>
            <person name="Turano F.J."/>
            <person name="Muhitch M.J."/>
            <person name="Felker F.C."/>
            <person name="McMahon M.B."/>
        </authorList>
    </citation>
    <scope>SUBCELLULAR LOCATION</scope>
    <scope>TISSUE SPECIFICITY</scope>
</reference>
<reference key="8">
    <citation type="journal article" date="2013" name="Plant Cell">
        <title>Interacting glutamate receptor-like proteins in phloem regulate lateral root initiation in Arabidopsis.</title>
        <authorList>
            <person name="Vincill E.D."/>
            <person name="Clarin A.E."/>
            <person name="Molenda J.N."/>
            <person name="Spalding E.P."/>
        </authorList>
    </citation>
    <scope>FUNCTION</scope>
    <scope>INTERACTION WITH GLR3.4</scope>
    <scope>SUBCELLULAR LOCATION</scope>
    <scope>TISSUE SPECIFICITY</scope>
    <scope>DISRUPTION PHENOTYPE</scope>
</reference>
<reference key="9">
    <citation type="journal article" date="2020" name="Structure">
        <title>Structure of the Arabidopsis glutamate receptor-like channel GLR3.2 ligand-binding domain.</title>
        <authorList>
            <person name="Gangwar S.P."/>
            <person name="Green M.N."/>
            <person name="Michard E."/>
            <person name="Simon A.A."/>
            <person name="Feijo J.A."/>
            <person name="Sobolevsky A.I."/>
        </authorList>
    </citation>
    <scope>X-RAY CRYSTALLOGRAPHY (1.58 ANGSTROMS) OF 419-572 AND 682-811 IN COMPLEX WITH L-METHIONINE AND GLYCINE</scope>
    <scope>MUTAGENESIS OF ARG-551</scope>
</reference>
<evidence type="ECO:0000255" key="1"/>
<evidence type="ECO:0000256" key="2">
    <source>
        <dbReference type="SAM" id="MobiDB-lite"/>
    </source>
</evidence>
<evidence type="ECO:0000269" key="3">
    <source>
    </source>
</evidence>
<evidence type="ECO:0000269" key="4">
    <source>
    </source>
</evidence>
<evidence type="ECO:0000269" key="5">
    <source>
    </source>
</evidence>
<evidence type="ECO:0000269" key="6">
    <source>
    </source>
</evidence>
<evidence type="ECO:0000269" key="7">
    <source ref="7"/>
</evidence>
<evidence type="ECO:0000303" key="8">
    <source>
    </source>
</evidence>
<evidence type="ECO:0000303" key="9">
    <source>
    </source>
</evidence>
<evidence type="ECO:0000303" key="10">
    <source>
    </source>
</evidence>
<evidence type="ECO:0000305" key="11"/>
<evidence type="ECO:0000312" key="12">
    <source>
        <dbReference type="Araport" id="AT4G35290"/>
    </source>
</evidence>
<evidence type="ECO:0000312" key="13">
    <source>
        <dbReference type="EMBL" id="CAA18740.1"/>
    </source>
</evidence>
<evidence type="ECO:0007744" key="14">
    <source>
        <dbReference type="PDB" id="6VE8"/>
    </source>
</evidence>
<evidence type="ECO:0007744" key="15">
    <source>
        <dbReference type="PDB" id="6VEA"/>
    </source>
</evidence>
<evidence type="ECO:0007829" key="16">
    <source>
        <dbReference type="PDB" id="6VEA"/>
    </source>
</evidence>
<name>GLR32_ARATH</name>
<accession>Q93YT1</accession>
<accession>O65498</accession>
<accession>Q9C561</accession>
<proteinExistence type="evidence at protein level"/>
<dbReference type="EMBL" id="AF159498">
    <property type="protein sequence ID" value="AAK13248.1"/>
    <property type="molecule type" value="mRNA"/>
</dbReference>
<dbReference type="EMBL" id="AF159499">
    <property type="protein sequence ID" value="AAK13249.1"/>
    <property type="molecule type" value="Genomic_DNA"/>
</dbReference>
<dbReference type="EMBL" id="AL022604">
    <property type="protein sequence ID" value="CAA18740.1"/>
    <property type="status" value="ALT_SEQ"/>
    <property type="molecule type" value="Genomic_DNA"/>
</dbReference>
<dbReference type="EMBL" id="AL161587">
    <property type="protein sequence ID" value="CAB80246.1"/>
    <property type="status" value="ALT_SEQ"/>
    <property type="molecule type" value="Genomic_DNA"/>
</dbReference>
<dbReference type="EMBL" id="CP002687">
    <property type="protein sequence ID" value="AEE86490.1"/>
    <property type="molecule type" value="Genomic_DNA"/>
</dbReference>
<dbReference type="EMBL" id="CP002687">
    <property type="protein sequence ID" value="AEE86491.1"/>
    <property type="molecule type" value="Genomic_DNA"/>
</dbReference>
<dbReference type="EMBL" id="CP002687">
    <property type="protein sequence ID" value="ANM67778.1"/>
    <property type="molecule type" value="Genomic_DNA"/>
</dbReference>
<dbReference type="EMBL" id="CP002687">
    <property type="protein sequence ID" value="ANM67779.1"/>
    <property type="molecule type" value="Genomic_DNA"/>
</dbReference>
<dbReference type="EMBL" id="CP002687">
    <property type="protein sequence ID" value="ANM67781.1"/>
    <property type="molecule type" value="Genomic_DNA"/>
</dbReference>
<dbReference type="EMBL" id="AY059778">
    <property type="protein sequence ID" value="AAL24126.1"/>
    <property type="molecule type" value="mRNA"/>
</dbReference>
<dbReference type="PIR" id="T06128">
    <property type="entry name" value="T06128"/>
</dbReference>
<dbReference type="RefSeq" id="NP_001320141.1">
    <property type="nucleotide sequence ID" value="NM_001342335.1"/>
</dbReference>
<dbReference type="RefSeq" id="NP_001329586.1">
    <property type="nucleotide sequence ID" value="NM_001342336.1"/>
</dbReference>
<dbReference type="RefSeq" id="NP_001329588.1">
    <property type="nucleotide sequence ID" value="NM_001342337.1"/>
</dbReference>
<dbReference type="RefSeq" id="NP_567981.1">
    <property type="nucleotide sequence ID" value="NM_119695.4"/>
</dbReference>
<dbReference type="RefSeq" id="NP_974686.1">
    <property type="nucleotide sequence ID" value="NM_202957.3"/>
</dbReference>
<dbReference type="PDB" id="6VE8">
    <property type="method" value="X-ray"/>
    <property type="resolution" value="1.75 A"/>
    <property type="chains" value="A=419-572, A=682-811"/>
</dbReference>
<dbReference type="PDB" id="6VEA">
    <property type="method" value="X-ray"/>
    <property type="resolution" value="1.58 A"/>
    <property type="chains" value="A=419-572, A=682-811"/>
</dbReference>
<dbReference type="PDBsum" id="6VE8"/>
<dbReference type="PDBsum" id="6VEA"/>
<dbReference type="SMR" id="Q93YT1"/>
<dbReference type="BioGRID" id="14964">
    <property type="interactions" value="15"/>
</dbReference>
<dbReference type="FunCoup" id="Q93YT1">
    <property type="interactions" value="217"/>
</dbReference>
<dbReference type="IntAct" id="Q93YT1">
    <property type="interactions" value="4"/>
</dbReference>
<dbReference type="STRING" id="3702.Q93YT1"/>
<dbReference type="GlyCosmos" id="Q93YT1">
    <property type="glycosylation" value="10 sites, No reported glycans"/>
</dbReference>
<dbReference type="GlyGen" id="Q93YT1">
    <property type="glycosylation" value="10 sites"/>
</dbReference>
<dbReference type="PaxDb" id="3702-AT4G35290.2"/>
<dbReference type="EnsemblPlants" id="AT4G35290.1">
    <property type="protein sequence ID" value="AT4G35290.1"/>
    <property type="gene ID" value="AT4G35290"/>
</dbReference>
<dbReference type="EnsemblPlants" id="AT4G35290.2">
    <property type="protein sequence ID" value="AT4G35290.2"/>
    <property type="gene ID" value="AT4G35290"/>
</dbReference>
<dbReference type="EnsemblPlants" id="AT4G35290.3">
    <property type="protein sequence ID" value="AT4G35290.3"/>
    <property type="gene ID" value="AT4G35290"/>
</dbReference>
<dbReference type="EnsemblPlants" id="AT4G35290.4">
    <property type="protein sequence ID" value="AT4G35290.4"/>
    <property type="gene ID" value="AT4G35290"/>
</dbReference>
<dbReference type="EnsemblPlants" id="AT4G35290.5">
    <property type="protein sequence ID" value="AT4G35290.5"/>
    <property type="gene ID" value="AT4G35290"/>
</dbReference>
<dbReference type="GeneID" id="829682"/>
<dbReference type="Gramene" id="AT4G35290.1">
    <property type="protein sequence ID" value="AT4G35290.1"/>
    <property type="gene ID" value="AT4G35290"/>
</dbReference>
<dbReference type="Gramene" id="AT4G35290.2">
    <property type="protein sequence ID" value="AT4G35290.2"/>
    <property type="gene ID" value="AT4G35290"/>
</dbReference>
<dbReference type="Gramene" id="AT4G35290.3">
    <property type="protein sequence ID" value="AT4G35290.3"/>
    <property type="gene ID" value="AT4G35290"/>
</dbReference>
<dbReference type="Gramene" id="AT4G35290.4">
    <property type="protein sequence ID" value="AT4G35290.4"/>
    <property type="gene ID" value="AT4G35290"/>
</dbReference>
<dbReference type="Gramene" id="AT4G35290.5">
    <property type="protein sequence ID" value="AT4G35290.5"/>
    <property type="gene ID" value="AT4G35290"/>
</dbReference>
<dbReference type="KEGG" id="ath:AT4G35290"/>
<dbReference type="Araport" id="AT4G35290"/>
<dbReference type="TAIR" id="AT4G35290">
    <property type="gene designation" value="GLUR2"/>
</dbReference>
<dbReference type="eggNOG" id="KOG1052">
    <property type="taxonomic scope" value="Eukaryota"/>
</dbReference>
<dbReference type="HOGENOM" id="CLU_007358_0_1_1"/>
<dbReference type="InParanoid" id="Q93YT1"/>
<dbReference type="OMA" id="FANNTPD"/>
<dbReference type="OrthoDB" id="5984008at2759"/>
<dbReference type="PhylomeDB" id="Q93YT1"/>
<dbReference type="PRO" id="PR:Q93YT1"/>
<dbReference type="Proteomes" id="UP000006548">
    <property type="component" value="Chromosome 4"/>
</dbReference>
<dbReference type="ExpressionAtlas" id="Q93YT1">
    <property type="expression patterns" value="baseline and differential"/>
</dbReference>
<dbReference type="GO" id="GO:0005886">
    <property type="term" value="C:plasma membrane"/>
    <property type="evidence" value="ECO:0000250"/>
    <property type="project" value="UniProtKB"/>
</dbReference>
<dbReference type="GO" id="GO:0005262">
    <property type="term" value="F:calcium channel activity"/>
    <property type="evidence" value="ECO:0000250"/>
    <property type="project" value="UniProtKB"/>
</dbReference>
<dbReference type="GO" id="GO:0008066">
    <property type="term" value="F:glutamate receptor activity"/>
    <property type="evidence" value="ECO:0000250"/>
    <property type="project" value="UniProtKB"/>
</dbReference>
<dbReference type="GO" id="GO:0015276">
    <property type="term" value="F:ligand-gated monoatomic ion channel activity"/>
    <property type="evidence" value="ECO:0007669"/>
    <property type="project" value="InterPro"/>
</dbReference>
<dbReference type="GO" id="GO:0006816">
    <property type="term" value="P:calcium ion transport"/>
    <property type="evidence" value="ECO:0000250"/>
    <property type="project" value="UniProtKB"/>
</dbReference>
<dbReference type="GO" id="GO:0019722">
    <property type="term" value="P:calcium-mediated signaling"/>
    <property type="evidence" value="ECO:0000250"/>
    <property type="project" value="UniProtKB"/>
</dbReference>
<dbReference type="GO" id="GO:0071230">
    <property type="term" value="P:cellular response to amino acid stimulus"/>
    <property type="evidence" value="ECO:0000250"/>
    <property type="project" value="UniProtKB"/>
</dbReference>
<dbReference type="CDD" id="cd13686">
    <property type="entry name" value="GluR_Plant"/>
    <property type="match status" value="1"/>
</dbReference>
<dbReference type="CDD" id="cd19990">
    <property type="entry name" value="PBP1_GABAb_receptor_plant"/>
    <property type="match status" value="1"/>
</dbReference>
<dbReference type="FunFam" id="1.10.287.70:FF:000037">
    <property type="entry name" value="Glutamate receptor"/>
    <property type="match status" value="1"/>
</dbReference>
<dbReference type="FunFam" id="3.40.190.10:FF:000054">
    <property type="entry name" value="Glutamate receptor"/>
    <property type="match status" value="1"/>
</dbReference>
<dbReference type="FunFam" id="3.40.190.10:FF:000175">
    <property type="entry name" value="Glutamate receptor"/>
    <property type="match status" value="1"/>
</dbReference>
<dbReference type="FunFam" id="3.40.50.2300:FF:000081">
    <property type="entry name" value="Glutamate receptor"/>
    <property type="match status" value="1"/>
</dbReference>
<dbReference type="Gene3D" id="1.10.287.70">
    <property type="match status" value="1"/>
</dbReference>
<dbReference type="Gene3D" id="3.40.50.2300">
    <property type="match status" value="2"/>
</dbReference>
<dbReference type="Gene3D" id="3.40.190.10">
    <property type="entry name" value="Periplasmic binding protein-like II"/>
    <property type="match status" value="2"/>
</dbReference>
<dbReference type="InterPro" id="IPR001828">
    <property type="entry name" value="ANF_lig-bd_rcpt"/>
</dbReference>
<dbReference type="InterPro" id="IPR044440">
    <property type="entry name" value="GABAb_receptor_plant_PBP1"/>
</dbReference>
<dbReference type="InterPro" id="IPR015683">
    <property type="entry name" value="Ionotropic_Glu_rcpt"/>
</dbReference>
<dbReference type="InterPro" id="IPR001320">
    <property type="entry name" value="Iontro_rcpt_C"/>
</dbReference>
<dbReference type="InterPro" id="IPR017103">
    <property type="entry name" value="Iontropic_Glu_rcpt_pln"/>
</dbReference>
<dbReference type="InterPro" id="IPR028082">
    <property type="entry name" value="Peripla_BP_I"/>
</dbReference>
<dbReference type="InterPro" id="IPR001638">
    <property type="entry name" value="Solute-binding_3/MltF_N"/>
</dbReference>
<dbReference type="PANTHER" id="PTHR18966">
    <property type="entry name" value="IONOTROPIC GLUTAMATE RECEPTOR"/>
    <property type="match status" value="1"/>
</dbReference>
<dbReference type="Pfam" id="PF01094">
    <property type="entry name" value="ANF_receptor"/>
    <property type="match status" value="1"/>
</dbReference>
<dbReference type="Pfam" id="PF00060">
    <property type="entry name" value="Lig_chan"/>
    <property type="match status" value="1"/>
</dbReference>
<dbReference type="Pfam" id="PF00497">
    <property type="entry name" value="SBP_bac_3"/>
    <property type="match status" value="1"/>
</dbReference>
<dbReference type="PIRSF" id="PIRSF037090">
    <property type="entry name" value="Iontro_Glu-like_rcpt_pln"/>
    <property type="match status" value="1"/>
</dbReference>
<dbReference type="SMART" id="SM00079">
    <property type="entry name" value="PBPe"/>
    <property type="match status" value="1"/>
</dbReference>
<dbReference type="SUPFAM" id="SSF53822">
    <property type="entry name" value="Periplasmic binding protein-like I"/>
    <property type="match status" value="1"/>
</dbReference>
<dbReference type="SUPFAM" id="SSF53850">
    <property type="entry name" value="Periplasmic binding protein-like II"/>
    <property type="match status" value="1"/>
</dbReference>
<comment type="function">
    <text evidence="3 5 11">Glutamate-gated receptor that probably acts as a non-selective cation channel (Probable). May be involved in light-signal transduction and calcium homeostasis via the regulation of calcium influx into cells (Probable). Could play a role in calcium unloading from the xylem vessels (PubMed:11158446). Acts as a negative regulator of lateral root initiation and development (PubMed:23590882). May restrict primordia numbers and position along the root axis by a signaling process originating in the phloem (PubMed:23590882).</text>
</comment>
<comment type="subunit">
    <text evidence="5">Forms a heteromeric channel with GLR3.4.</text>
</comment>
<comment type="subcellular location">
    <subcellularLocation>
        <location evidence="5 7">Cell membrane</location>
        <topology evidence="7">Multi-pass membrane protein</topology>
    </subcellularLocation>
    <text evidence="5 7">Localizes to the plasma membrane.</text>
</comment>
<comment type="tissue specificity">
    <text evidence="3 4 5 7">Expressed in leaves and siliques, and at lower level in flowers and roots (PubMed:12082126). Detected in the vascular tissues of both shoots and roots (PubMed:11158446, Ref.7). Expressed in root phloem (PubMed:23590882).</text>
</comment>
<comment type="disruption phenotype">
    <text evidence="5">Overproduction and aberrant placement of lateral root primordia.</text>
</comment>
<comment type="miscellaneous">
    <text evidence="3">Overexpression of the gene leads to calcium deficiency and hypersensitivity to potassium and sodium.</text>
</comment>
<comment type="similarity">
    <text evidence="11">Belongs to the glutamate-gated ion channel (TC 1.A.10.1) family.</text>
</comment>
<comment type="sequence caution" evidence="11">
    <conflict type="erroneous gene model prediction">
        <sequence resource="EMBL-CDS" id="CAA18740"/>
    </conflict>
</comment>
<comment type="sequence caution" evidence="11">
    <conflict type="erroneous gene model prediction">
        <sequence resource="EMBL-CDS" id="CAB80246"/>
    </conflict>
</comment>
<keyword id="KW-0002">3D-structure</keyword>
<keyword id="KW-1003">Cell membrane</keyword>
<keyword id="KW-1015">Disulfide bond</keyword>
<keyword id="KW-0325">Glycoprotein</keyword>
<keyword id="KW-0407">Ion channel</keyword>
<keyword id="KW-0406">Ion transport</keyword>
<keyword id="KW-1071">Ligand-gated ion channel</keyword>
<keyword id="KW-0472">Membrane</keyword>
<keyword id="KW-0675">Receptor</keyword>
<keyword id="KW-1185">Reference proteome</keyword>
<keyword id="KW-0732">Signal</keyword>
<keyword id="KW-0812">Transmembrane</keyword>
<keyword id="KW-1133">Transmembrane helix</keyword>
<keyword id="KW-0813">Transport</keyword>
<protein>
    <recommendedName>
        <fullName evidence="9">Glutamate receptor 3.2</fullName>
        <shortName evidence="9">AtGLR3.2</shortName>
    </recommendedName>
    <alternativeName>
        <fullName evidence="8">AtGluR2</fullName>
    </alternativeName>
    <alternativeName>
        <fullName evidence="10">Glutamate receptor-like protein 3.2</fullName>
    </alternativeName>
    <alternativeName>
        <fullName evidence="11">Ligand-gated ion channel 3.2</fullName>
    </alternativeName>
</protein>
<organism>
    <name type="scientific">Arabidopsis thaliana</name>
    <name type="common">Mouse-ear cress</name>
    <dbReference type="NCBI Taxonomy" id="3702"/>
    <lineage>
        <taxon>Eukaryota</taxon>
        <taxon>Viridiplantae</taxon>
        <taxon>Streptophyta</taxon>
        <taxon>Embryophyta</taxon>
        <taxon>Tracheophyta</taxon>
        <taxon>Spermatophyta</taxon>
        <taxon>Magnoliopsida</taxon>
        <taxon>eudicotyledons</taxon>
        <taxon>Gunneridae</taxon>
        <taxon>Pentapetalae</taxon>
        <taxon>rosids</taxon>
        <taxon>malvids</taxon>
        <taxon>Brassicales</taxon>
        <taxon>Brassicaceae</taxon>
        <taxon>Camelineae</taxon>
        <taxon>Arabidopsis</taxon>
    </lineage>
</organism>
<sequence>MFWVLVLLSFIVLIGDGMISEGAGLRPRYVDVGAIFSLGTLQGEVTNIAMKAAEEDVNSDPSFLGGSKLRITTYDAKRNGFLTIMGALQFMETDAVAIIGPQTSIMAHVLSHLANELSVPMLSFTALDPSLSALQFPFFVQTAPSDLFLMRAIAEMISYYGWSEVIALYNDDDNSRNGITALGDELEGRRCKISYKAVLPLDVVITSPREIINELVKIQGMESRVIIVNTFPKTGKKIFEEAQKLGMMEKGYVWIATTWLTSLLDSVNPLPAKTAESLRGVLTLRIHTPNSKKKKDFVARWNKLSNGTVGLNVYGLYAYDTVWIIARAVKRLLDSRANISFSSDPKLTSMKGGGSLNLGALSIFDQGSQFLDYIVNTNMTGVTGQIQFLPDRSMIQPSYDIINVVDDGFRQIGYWSNHSGLSIIPPESLYKKLSNRSSSNQHLNNVTWPGGTSETPRGWVFPNNGRRLRIGVPDRASFKEFVSRLDGSNKVQGYAIDVFEAAVKLISYPVPHEFVLFGDGLKNPNFNEFVNNVTIGVFDAVVGDIAIVTKRTRIVDFTQPYIESGLVVVAPVTKLNDTPWAFLRPFTPPMWAVTAAFFLIVGSVIWILEHRINDEFRGPPRKQIVTILWFSFSTMFFSHRENTVSTLGRAVLLIWLFVVLIITSSYTASLTSILTVQQLNSPIRGVDTLISSSGRVGFQVGSYAENYMIDELNIARSRLVPLGSPKEYAAALQNGTVAAIVDERPYVDLFLSEFCGFAIRGQEFTRSGWGFAFPRDSPLAIDMSTAILGLSETGQLQKIHDKWLSRSNCSNLNGSVSDEDSEQLKLRSFWGLFLVCGISCFIALFIYFFKIVRDFFRHGKYDEEATVPSPESSRSKSLQTFLAYFDEKEDESKRRMKRKRNDDLSLKPSRPI</sequence>
<gene>
    <name evidence="9" type="primary">GLR3.2</name>
    <name evidence="8" type="synonym">GLUR2</name>
    <name evidence="12" type="ordered locus">At4g35290</name>
    <name evidence="13" type="ORF">F23E12.150</name>
</gene>
<feature type="signal peptide" evidence="1">
    <location>
        <begin position="1"/>
        <end position="22"/>
    </location>
</feature>
<feature type="chain" id="PRO_0000011606" description="Glutamate receptor 3.2">
    <location>
        <begin position="23"/>
        <end position="912"/>
    </location>
</feature>
<feature type="topological domain" description="Extracellular" evidence="1">
    <location>
        <begin position="23"/>
        <end position="587"/>
    </location>
</feature>
<feature type="transmembrane region" description="Helical" evidence="1">
    <location>
        <begin position="588"/>
        <end position="608"/>
    </location>
</feature>
<feature type="topological domain" description="Cytoplasmic" evidence="1">
    <location>
        <begin position="609"/>
        <end position="617"/>
    </location>
</feature>
<feature type="transmembrane region" description="Helical" evidence="1">
    <location>
        <begin position="618"/>
        <end position="638"/>
    </location>
</feature>
<feature type="topological domain" description="Cytoplasmic" evidence="1">
    <location>
        <begin position="639"/>
        <end position="649"/>
    </location>
</feature>
<feature type="transmembrane region" description="Helical" evidence="1">
    <location>
        <begin position="650"/>
        <end position="670"/>
    </location>
</feature>
<feature type="topological domain" description="Extracellular" evidence="1">
    <location>
        <begin position="671"/>
        <end position="828"/>
    </location>
</feature>
<feature type="transmembrane region" description="Helical" evidence="1">
    <location>
        <begin position="829"/>
        <end position="849"/>
    </location>
</feature>
<feature type="topological domain" description="Cytoplasmic" evidence="1">
    <location>
        <begin position="850"/>
        <end position="912"/>
    </location>
</feature>
<feature type="region of interest" description="Disordered" evidence="2">
    <location>
        <begin position="888"/>
        <end position="912"/>
    </location>
</feature>
<feature type="binding site" evidence="6 15">
    <location>
        <begin position="544"/>
        <end position="546"/>
    </location>
    <ligand>
        <name>glycine</name>
        <dbReference type="ChEBI" id="CHEBI:57305"/>
    </ligand>
</feature>
<feature type="binding site" evidence="6 14">
    <location>
        <begin position="544"/>
        <end position="546"/>
    </location>
    <ligand>
        <name>L-methionine</name>
        <dbReference type="ChEBI" id="CHEBI:57844"/>
    </ligand>
</feature>
<feature type="binding site" evidence="6 15">
    <location>
        <position position="551"/>
    </location>
    <ligand>
        <name>glycine</name>
        <dbReference type="ChEBI" id="CHEBI:57305"/>
    </ligand>
</feature>
<feature type="binding site" evidence="6 14">
    <location>
        <position position="551"/>
    </location>
    <ligand>
        <name>L-methionine</name>
        <dbReference type="ChEBI" id="CHEBI:57844"/>
    </ligand>
</feature>
<feature type="binding site" evidence="6 15">
    <location>
        <position position="703"/>
    </location>
    <ligand>
        <name>glycine</name>
        <dbReference type="ChEBI" id="CHEBI:57305"/>
    </ligand>
</feature>
<feature type="binding site" evidence="6 14">
    <location>
        <position position="703"/>
    </location>
    <ligand>
        <name>L-methionine</name>
        <dbReference type="ChEBI" id="CHEBI:57844"/>
    </ligand>
</feature>
<feature type="binding site" evidence="6 15">
    <location>
        <begin position="743"/>
        <end position="746"/>
    </location>
    <ligand>
        <name>glycine</name>
        <dbReference type="ChEBI" id="CHEBI:57305"/>
    </ligand>
</feature>
<feature type="binding site" evidence="6 14">
    <location>
        <begin position="743"/>
        <end position="746"/>
    </location>
    <ligand>
        <name>L-methionine</name>
        <dbReference type="ChEBI" id="CHEBI:57844"/>
    </ligand>
</feature>
<feature type="glycosylation site" description="N-linked (GlcNAc...) asparagine" evidence="1">
    <location>
        <position position="306"/>
    </location>
</feature>
<feature type="glycosylation site" description="N-linked (GlcNAc...) asparagine" evidence="1">
    <location>
        <position position="338"/>
    </location>
</feature>
<feature type="glycosylation site" description="N-linked (GlcNAc...) asparagine" evidence="1">
    <location>
        <position position="378"/>
    </location>
</feature>
<feature type="glycosylation site" description="N-linked (GlcNAc...) asparagine" evidence="1">
    <location>
        <position position="417"/>
    </location>
</feature>
<feature type="glycosylation site" description="N-linked (GlcNAc...) asparagine" evidence="1">
    <location>
        <position position="435"/>
    </location>
</feature>
<feature type="glycosylation site" description="N-linked (GlcNAc...) asparagine" evidence="1">
    <location>
        <position position="445"/>
    </location>
</feature>
<feature type="glycosylation site" description="N-linked (GlcNAc...) asparagine" evidence="1">
    <location>
        <position position="532"/>
    </location>
</feature>
<feature type="glycosylation site" description="N-linked (GlcNAc...) asparagine" evidence="1">
    <location>
        <position position="734"/>
    </location>
</feature>
<feature type="glycosylation site" description="N-linked (GlcNAc...) asparagine" evidence="1">
    <location>
        <position position="808"/>
    </location>
</feature>
<feature type="glycosylation site" description="N-linked (GlcNAc...) asparagine" evidence="1">
    <location>
        <position position="813"/>
    </location>
</feature>
<feature type="disulfide bond" evidence="6 14 15">
    <location>
        <begin position="755"/>
        <end position="809"/>
    </location>
</feature>
<feature type="mutagenesis site" description="Behaves as a constitutively open channel." evidence="6">
    <original>R</original>
    <variation>A</variation>
    <location>
        <position position="551"/>
    </location>
</feature>
<feature type="sequence conflict" description="In Ref. 4; AAL24126." evidence="11" ref="4">
    <original>N</original>
    <variation>S</variation>
    <location>
        <position position="523"/>
    </location>
</feature>
<feature type="sequence conflict" description="In Ref. 1; AAK13248/AAK13249." evidence="11" ref="1">
    <original>P</original>
    <variation>S</variation>
    <location>
        <position position="868"/>
    </location>
</feature>
<feature type="strand" evidence="16">
    <location>
        <begin position="468"/>
        <end position="473"/>
    </location>
</feature>
<feature type="strand" evidence="16">
    <location>
        <begin position="481"/>
        <end position="485"/>
    </location>
</feature>
<feature type="strand" evidence="16">
    <location>
        <begin position="491"/>
        <end position="493"/>
    </location>
</feature>
<feature type="helix" evidence="16">
    <location>
        <begin position="494"/>
        <end position="504"/>
    </location>
</feature>
<feature type="strand" evidence="16">
    <location>
        <begin position="506"/>
        <end position="508"/>
    </location>
</feature>
<feature type="strand" evidence="16">
    <location>
        <begin position="512"/>
        <end position="518"/>
    </location>
</feature>
<feature type="strand" evidence="16">
    <location>
        <begin position="520"/>
        <end position="522"/>
    </location>
</feature>
<feature type="helix" evidence="16">
    <location>
        <begin position="526"/>
        <end position="534"/>
    </location>
</feature>
<feature type="strand" evidence="16">
    <location>
        <begin position="539"/>
        <end position="546"/>
    </location>
</feature>
<feature type="helix" evidence="16">
    <location>
        <begin position="549"/>
        <end position="552"/>
    </location>
</feature>
<feature type="strand" evidence="16">
    <location>
        <begin position="555"/>
        <end position="557"/>
    </location>
</feature>
<feature type="strand" evidence="16">
    <location>
        <begin position="566"/>
        <end position="571"/>
    </location>
</feature>
<feature type="helix" evidence="16">
    <location>
        <begin position="686"/>
        <end position="690"/>
    </location>
</feature>
<feature type="strand" evidence="16">
    <location>
        <begin position="696"/>
        <end position="699"/>
    </location>
</feature>
<feature type="helix" evidence="16">
    <location>
        <begin position="704"/>
        <end position="709"/>
    </location>
</feature>
<feature type="helix" evidence="16">
    <location>
        <begin position="716"/>
        <end position="718"/>
    </location>
</feature>
<feature type="strand" evidence="16">
    <location>
        <begin position="719"/>
        <end position="722"/>
    </location>
</feature>
<feature type="helix" evidence="16">
    <location>
        <begin position="725"/>
        <end position="733"/>
    </location>
</feature>
<feature type="strand" evidence="16">
    <location>
        <begin position="738"/>
        <end position="743"/>
    </location>
</feature>
<feature type="helix" evidence="16">
    <location>
        <begin position="744"/>
        <end position="753"/>
    </location>
</feature>
<feature type="strand" evidence="16">
    <location>
        <begin position="756"/>
        <end position="762"/>
    </location>
</feature>
<feature type="strand" evidence="16">
    <location>
        <begin position="769"/>
        <end position="773"/>
    </location>
</feature>
<feature type="helix" evidence="16">
    <location>
        <begin position="778"/>
        <end position="792"/>
    </location>
</feature>
<feature type="helix" evidence="16">
    <location>
        <begin position="795"/>
        <end position="804"/>
    </location>
</feature>